<gene>
    <name type="primary">GRC3</name>
    <name type="ordered locus">CAGL0D02816g</name>
</gene>
<accession>Q6FW56</accession>
<evidence type="ECO:0000250" key="1"/>
<evidence type="ECO:0000255" key="2"/>
<evidence type="ECO:0000256" key="3">
    <source>
        <dbReference type="SAM" id="MobiDB-lite"/>
    </source>
</evidence>
<evidence type="ECO:0000305" key="4"/>
<name>GRC3_CANGA</name>
<proteinExistence type="inferred from homology"/>
<reference key="1">
    <citation type="journal article" date="2004" name="Nature">
        <title>Genome evolution in yeasts.</title>
        <authorList>
            <person name="Dujon B."/>
            <person name="Sherman D."/>
            <person name="Fischer G."/>
            <person name="Durrens P."/>
            <person name="Casaregola S."/>
            <person name="Lafontaine I."/>
            <person name="de Montigny J."/>
            <person name="Marck C."/>
            <person name="Neuveglise C."/>
            <person name="Talla E."/>
            <person name="Goffard N."/>
            <person name="Frangeul L."/>
            <person name="Aigle M."/>
            <person name="Anthouard V."/>
            <person name="Babour A."/>
            <person name="Barbe V."/>
            <person name="Barnay S."/>
            <person name="Blanchin S."/>
            <person name="Beckerich J.-M."/>
            <person name="Beyne E."/>
            <person name="Bleykasten C."/>
            <person name="Boisrame A."/>
            <person name="Boyer J."/>
            <person name="Cattolico L."/>
            <person name="Confanioleri F."/>
            <person name="de Daruvar A."/>
            <person name="Despons L."/>
            <person name="Fabre E."/>
            <person name="Fairhead C."/>
            <person name="Ferry-Dumazet H."/>
            <person name="Groppi A."/>
            <person name="Hantraye F."/>
            <person name="Hennequin C."/>
            <person name="Jauniaux N."/>
            <person name="Joyet P."/>
            <person name="Kachouri R."/>
            <person name="Kerrest A."/>
            <person name="Koszul R."/>
            <person name="Lemaire M."/>
            <person name="Lesur I."/>
            <person name="Ma L."/>
            <person name="Muller H."/>
            <person name="Nicaud J.-M."/>
            <person name="Nikolski M."/>
            <person name="Oztas S."/>
            <person name="Ozier-Kalogeropoulos O."/>
            <person name="Pellenz S."/>
            <person name="Potier S."/>
            <person name="Richard G.-F."/>
            <person name="Straub M.-L."/>
            <person name="Suleau A."/>
            <person name="Swennen D."/>
            <person name="Tekaia F."/>
            <person name="Wesolowski-Louvel M."/>
            <person name="Westhof E."/>
            <person name="Wirth B."/>
            <person name="Zeniou-Meyer M."/>
            <person name="Zivanovic Y."/>
            <person name="Bolotin-Fukuhara M."/>
            <person name="Thierry A."/>
            <person name="Bouchier C."/>
            <person name="Caudron B."/>
            <person name="Scarpelli C."/>
            <person name="Gaillardin C."/>
            <person name="Weissenbach J."/>
            <person name="Wincker P."/>
            <person name="Souciet J.-L."/>
        </authorList>
    </citation>
    <scope>NUCLEOTIDE SEQUENCE [LARGE SCALE GENOMIC DNA]</scope>
    <source>
        <strain>ATCC 2001 / BCRC 20586 / JCM 3761 / NBRC 0622 / NRRL Y-65 / CBS 138</strain>
    </source>
</reference>
<comment type="function">
    <text evidence="1">Polynucleotide 5'-kinase involved in rRNA processing.</text>
</comment>
<comment type="subcellular location">
    <subcellularLocation>
        <location evidence="1">Nucleus</location>
        <location evidence="1">Nucleolus</location>
    </subcellularLocation>
</comment>
<comment type="similarity">
    <text evidence="4">Belongs to the Clp1 family. NOL9/GRC3 subfamily.</text>
</comment>
<keyword id="KW-0067">ATP-binding</keyword>
<keyword id="KW-0418">Kinase</keyword>
<keyword id="KW-0547">Nucleotide-binding</keyword>
<keyword id="KW-0539">Nucleus</keyword>
<keyword id="KW-1185">Reference proteome</keyword>
<keyword id="KW-0698">rRNA processing</keyword>
<keyword id="KW-0808">Transferase</keyword>
<protein>
    <recommendedName>
        <fullName>Polynucleotide 5'-hydroxyl-kinase GRC3</fullName>
        <ecNumber>2.7.1.-</ecNumber>
    </recommendedName>
</protein>
<sequence>MAETDLNALAYKDSDSTDTSSSSSSDEEYQAEVKVSNQNEKQVDYDSDTDLNTDNKVSSVDAYKPCVGENLIIRDSNIIILLRAKEKLCLSGLFDLKIEKGGLLYNDIHFNASSKTYHYWHPLSNSIPEIKSSFYAGFEDVDISAFYAAYDISPNNDYETVLKISNHKSKSLIDGEILMPSLKSLWITKEDFLQKNGYTNFSFDIIMPATLQEITTLNISKSWTNCLQKLKFINQNSIHDTRIMVIGGKNSGKSTFLRSLVEKVLYSHDISDKSVSEMLYLDLDPGQPEFSHPDCISMTRLTSNDMNFGQSFGQASPEVLKQYYIGSPSPQEYPTRYLNMVNKLITEFEDTMFAGISCINLPGWVKGFGLNILQKVLEIYKPTDIVYLESPSTVRHFSELRIPKSFSSTMMTEYSPRSYRIPAEFSNAAINNSPEIKFAPSDIRTYKLLCLFHRSDTSNVPTFDFRPLIAKSPKKISYGRAGIHTIIINIEFALVPSHELIQALEGTIVAIYHEENTDDEHDSSSDIRVLSNDDLETAKFITLGLVHSVDEERKYFNIYVPENMVATLKNLGNRFMIERLSTETPFCELSPPNKVLKTDQTSPFISFKTRKKYEHVWKIRKNIKRKGHHL</sequence>
<organism>
    <name type="scientific">Candida glabrata (strain ATCC 2001 / BCRC 20586 / JCM 3761 / NBRC 0622 / NRRL Y-65 / CBS 138)</name>
    <name type="common">Yeast</name>
    <name type="synonym">Nakaseomyces glabratus</name>
    <dbReference type="NCBI Taxonomy" id="284593"/>
    <lineage>
        <taxon>Eukaryota</taxon>
        <taxon>Fungi</taxon>
        <taxon>Dikarya</taxon>
        <taxon>Ascomycota</taxon>
        <taxon>Saccharomycotina</taxon>
        <taxon>Saccharomycetes</taxon>
        <taxon>Saccharomycetales</taxon>
        <taxon>Saccharomycetaceae</taxon>
        <taxon>Nakaseomyces</taxon>
    </lineage>
</organism>
<feature type="chain" id="PRO_0000087590" description="Polynucleotide 5'-hydroxyl-kinase GRC3">
    <location>
        <begin position="1"/>
        <end position="630"/>
    </location>
</feature>
<feature type="region of interest" description="Disordered" evidence="3">
    <location>
        <begin position="1"/>
        <end position="52"/>
    </location>
</feature>
<feature type="binding site" evidence="2">
    <location>
        <begin position="247"/>
        <end position="254"/>
    </location>
    <ligand>
        <name>ATP</name>
        <dbReference type="ChEBI" id="CHEBI:30616"/>
    </ligand>
</feature>
<dbReference type="EC" id="2.7.1.-"/>
<dbReference type="EMBL" id="CR380950">
    <property type="protein sequence ID" value="CAG58449.1"/>
    <property type="molecule type" value="Genomic_DNA"/>
</dbReference>
<dbReference type="RefSeq" id="XP_445538.1">
    <property type="nucleotide sequence ID" value="XM_445538.1"/>
</dbReference>
<dbReference type="SMR" id="Q6FW56"/>
<dbReference type="FunCoup" id="Q6FW56">
    <property type="interactions" value="157"/>
</dbReference>
<dbReference type="STRING" id="284593.Q6FW56"/>
<dbReference type="EnsemblFungi" id="CAGL0D02816g-T">
    <property type="protein sequence ID" value="CAGL0D02816g-T-p1"/>
    <property type="gene ID" value="CAGL0D02816g"/>
</dbReference>
<dbReference type="KEGG" id="cgr:2887173"/>
<dbReference type="CGD" id="CAL0128421">
    <property type="gene designation" value="CAGL0D02816g"/>
</dbReference>
<dbReference type="VEuPathDB" id="FungiDB:CAGL0D02816g"/>
<dbReference type="eggNOG" id="KOG2750">
    <property type="taxonomic scope" value="Eukaryota"/>
</dbReference>
<dbReference type="HOGENOM" id="CLU_010345_1_1_1"/>
<dbReference type="InParanoid" id="Q6FW56"/>
<dbReference type="OMA" id="EHVWKVR"/>
<dbReference type="Proteomes" id="UP000002428">
    <property type="component" value="Chromosome D"/>
</dbReference>
<dbReference type="GO" id="GO:0090730">
    <property type="term" value="C:Las1 complex"/>
    <property type="evidence" value="ECO:0007669"/>
    <property type="project" value="EnsemblFungi"/>
</dbReference>
<dbReference type="GO" id="GO:0030874">
    <property type="term" value="C:nucleolar chromatin"/>
    <property type="evidence" value="ECO:0007669"/>
    <property type="project" value="EnsemblFungi"/>
</dbReference>
<dbReference type="GO" id="GO:0005524">
    <property type="term" value="F:ATP binding"/>
    <property type="evidence" value="ECO:0007669"/>
    <property type="project" value="UniProtKB-KW"/>
</dbReference>
<dbReference type="GO" id="GO:0051731">
    <property type="term" value="F:polynucleotide 5'-hydroxyl-kinase activity"/>
    <property type="evidence" value="ECO:0000250"/>
    <property type="project" value="UniProtKB"/>
</dbReference>
<dbReference type="GO" id="GO:0000448">
    <property type="term" value="P:cleavage in ITS2 between 5.8S rRNA and LSU-rRNA of tricistronic rRNA transcript (SSU-rRNA, 5.8S rRNA, LSU-rRNA)"/>
    <property type="evidence" value="ECO:0007669"/>
    <property type="project" value="EnsemblFungi"/>
</dbReference>
<dbReference type="GO" id="GO:0006364">
    <property type="term" value="P:rRNA processing"/>
    <property type="evidence" value="ECO:0000250"/>
    <property type="project" value="UniProtKB"/>
</dbReference>
<dbReference type="GO" id="GO:0006363">
    <property type="term" value="P:termination of RNA polymerase I transcription"/>
    <property type="evidence" value="ECO:0007669"/>
    <property type="project" value="EnsemblFungi"/>
</dbReference>
<dbReference type="FunFam" id="3.40.50.300:FF:002306">
    <property type="entry name" value="Grc3p"/>
    <property type="match status" value="1"/>
</dbReference>
<dbReference type="Gene3D" id="3.40.50.300">
    <property type="entry name" value="P-loop containing nucleotide triphosphate hydrolases"/>
    <property type="match status" value="1"/>
</dbReference>
<dbReference type="InterPro" id="IPR045116">
    <property type="entry name" value="Clp1/Grc3"/>
</dbReference>
<dbReference type="InterPro" id="IPR032319">
    <property type="entry name" value="CLP1_P"/>
</dbReference>
<dbReference type="InterPro" id="IPR027417">
    <property type="entry name" value="P-loop_NTPase"/>
</dbReference>
<dbReference type="PANTHER" id="PTHR12755">
    <property type="entry name" value="CLEAVAGE/POLYADENYLATION FACTOR IA SUBUNIT CLP1P"/>
    <property type="match status" value="1"/>
</dbReference>
<dbReference type="PANTHER" id="PTHR12755:SF3">
    <property type="entry name" value="POLYNUCLEOTIDE 5'-HYDROXYL-KINASE NOL9"/>
    <property type="match status" value="1"/>
</dbReference>
<dbReference type="Pfam" id="PF16575">
    <property type="entry name" value="CLP1_P"/>
    <property type="match status" value="1"/>
</dbReference>
<dbReference type="SUPFAM" id="SSF52540">
    <property type="entry name" value="P-loop containing nucleoside triphosphate hydrolases"/>
    <property type="match status" value="1"/>
</dbReference>